<protein>
    <recommendedName>
        <fullName evidence="16">Myrosinase 1</fullName>
        <ecNumber evidence="14">3.2.1.147</ecNumber>
    </recommendedName>
    <alternativeName>
        <fullName evidence="15">Beta-glucosidase 38</fullName>
        <shortName evidence="15">AtBGLU38</shortName>
        <ecNumber evidence="14">3.2.1.21</ecNumber>
    </alternativeName>
    <alternativeName>
        <fullName evidence="16">Sinigrinase 1</fullName>
    </alternativeName>
    <alternativeName>
        <fullName evidence="16">Thioglucosidase 1</fullName>
    </alternativeName>
</protein>
<keyword id="KW-0002">3D-structure</keyword>
<keyword id="KW-0938">Abscisic acid signaling pathway</keyword>
<keyword id="KW-0025">Alternative splicing</keyword>
<keyword id="KW-1015">Disulfide bond</keyword>
<keyword id="KW-0325">Glycoprotein</keyword>
<keyword id="KW-0326">Glycosidase</keyword>
<keyword id="KW-0378">Hydrolase</keyword>
<keyword id="KW-0479">Metal-binding</keyword>
<keyword id="KW-0611">Plant defense</keyword>
<keyword id="KW-1185">Reference proteome</keyword>
<keyword id="KW-0732">Signal</keyword>
<keyword id="KW-0926">Vacuole</keyword>
<keyword id="KW-0862">Zinc</keyword>
<reference key="1">
    <citation type="journal article" date="1993" name="Plant Physiol.">
        <title>Arabidopsis cDNA sequence encoding myrosinase.</title>
        <authorList>
            <person name="Chadchawan S."/>
            <person name="Bishop J."/>
            <person name="Thangstad O.P."/>
            <person name="Bones A.M."/>
            <person name="Mitchell-Olds T."/>
            <person name="Bradley D."/>
        </authorList>
    </citation>
    <scope>NUCLEOTIDE SEQUENCE [MRNA] (ISOFORM 1)</scope>
    <source>
        <strain>cv. Columbia</strain>
    </source>
</reference>
<reference key="2">
    <citation type="journal article" date="1995" name="Plant Mol. Biol.">
        <title>The myrosinase gene family in Arabidopsis thaliana: gene organization, expression and evolution.</title>
        <authorList>
            <person name="Xue J."/>
            <person name="Joergensen M."/>
            <person name="Pihlgren U."/>
            <person name="Rask L."/>
        </authorList>
    </citation>
    <scope>NUCLEOTIDE SEQUENCE [GENOMIC DNA]</scope>
    <source>
        <strain>cv. Columbia</strain>
        <tissue>Leaf</tissue>
    </source>
</reference>
<reference key="3">
    <citation type="journal article" date="2000" name="Nature">
        <title>Sequence and analysis of chromosome 5 of the plant Arabidopsis thaliana.</title>
        <authorList>
            <person name="Tabata S."/>
            <person name="Kaneko T."/>
            <person name="Nakamura Y."/>
            <person name="Kotani H."/>
            <person name="Kato T."/>
            <person name="Asamizu E."/>
            <person name="Miyajima N."/>
            <person name="Sasamoto S."/>
            <person name="Kimura T."/>
            <person name="Hosouchi T."/>
            <person name="Kawashima K."/>
            <person name="Kohara M."/>
            <person name="Matsumoto M."/>
            <person name="Matsuno A."/>
            <person name="Muraki A."/>
            <person name="Nakayama S."/>
            <person name="Nakazaki N."/>
            <person name="Naruo K."/>
            <person name="Okumura S."/>
            <person name="Shinpo S."/>
            <person name="Takeuchi C."/>
            <person name="Wada T."/>
            <person name="Watanabe A."/>
            <person name="Yamada M."/>
            <person name="Yasuda M."/>
            <person name="Sato S."/>
            <person name="de la Bastide M."/>
            <person name="Huang E."/>
            <person name="Spiegel L."/>
            <person name="Gnoj L."/>
            <person name="O'Shaughnessy A."/>
            <person name="Preston R."/>
            <person name="Habermann K."/>
            <person name="Murray J."/>
            <person name="Johnson D."/>
            <person name="Rohlfing T."/>
            <person name="Nelson J."/>
            <person name="Stoneking T."/>
            <person name="Pepin K."/>
            <person name="Spieth J."/>
            <person name="Sekhon M."/>
            <person name="Armstrong J."/>
            <person name="Becker M."/>
            <person name="Belter E."/>
            <person name="Cordum H."/>
            <person name="Cordes M."/>
            <person name="Courtney L."/>
            <person name="Courtney W."/>
            <person name="Dante M."/>
            <person name="Du H."/>
            <person name="Edwards J."/>
            <person name="Fryman J."/>
            <person name="Haakensen B."/>
            <person name="Lamar E."/>
            <person name="Latreille P."/>
            <person name="Leonard S."/>
            <person name="Meyer R."/>
            <person name="Mulvaney E."/>
            <person name="Ozersky P."/>
            <person name="Riley A."/>
            <person name="Strowmatt C."/>
            <person name="Wagner-McPherson C."/>
            <person name="Wollam A."/>
            <person name="Yoakum M."/>
            <person name="Bell M."/>
            <person name="Dedhia N."/>
            <person name="Parnell L."/>
            <person name="Shah R."/>
            <person name="Rodriguez M."/>
            <person name="Hoon See L."/>
            <person name="Vil D."/>
            <person name="Baker J."/>
            <person name="Kirchoff K."/>
            <person name="Toth K."/>
            <person name="King L."/>
            <person name="Bahret A."/>
            <person name="Miller B."/>
            <person name="Marra M.A."/>
            <person name="Martienssen R."/>
            <person name="McCombie W.R."/>
            <person name="Wilson R.K."/>
            <person name="Murphy G."/>
            <person name="Bancroft I."/>
            <person name="Volckaert G."/>
            <person name="Wambutt R."/>
            <person name="Duesterhoeft A."/>
            <person name="Stiekema W."/>
            <person name="Pohl T."/>
            <person name="Entian K.-D."/>
            <person name="Terryn N."/>
            <person name="Hartley N."/>
            <person name="Bent E."/>
            <person name="Johnson S."/>
            <person name="Langham S.-A."/>
            <person name="McCullagh B."/>
            <person name="Robben J."/>
            <person name="Grymonprez B."/>
            <person name="Zimmermann W."/>
            <person name="Ramsperger U."/>
            <person name="Wedler H."/>
            <person name="Balke K."/>
            <person name="Wedler E."/>
            <person name="Peters S."/>
            <person name="van Staveren M."/>
            <person name="Dirkse W."/>
            <person name="Mooijman P."/>
            <person name="Klein Lankhorst R."/>
            <person name="Weitzenegger T."/>
            <person name="Bothe G."/>
            <person name="Rose M."/>
            <person name="Hauf J."/>
            <person name="Berneiser S."/>
            <person name="Hempel S."/>
            <person name="Feldpausch M."/>
            <person name="Lamberth S."/>
            <person name="Villarroel R."/>
            <person name="Gielen J."/>
            <person name="Ardiles W."/>
            <person name="Bents O."/>
            <person name="Lemcke K."/>
            <person name="Kolesov G."/>
            <person name="Mayer K.F.X."/>
            <person name="Rudd S."/>
            <person name="Schoof H."/>
            <person name="Schueller C."/>
            <person name="Zaccaria P."/>
            <person name="Mewes H.-W."/>
            <person name="Bevan M."/>
            <person name="Fransz P.F."/>
        </authorList>
    </citation>
    <scope>NUCLEOTIDE SEQUENCE [LARGE SCALE GENOMIC DNA]</scope>
    <source>
        <strain>cv. Columbia</strain>
    </source>
</reference>
<reference key="4">
    <citation type="journal article" date="2017" name="Plant J.">
        <title>Araport11: a complete reannotation of the Arabidopsis thaliana reference genome.</title>
        <authorList>
            <person name="Cheng C.Y."/>
            <person name="Krishnakumar V."/>
            <person name="Chan A.P."/>
            <person name="Thibaud-Nissen F."/>
            <person name="Schobel S."/>
            <person name="Town C.D."/>
        </authorList>
    </citation>
    <scope>GENOME REANNOTATION</scope>
    <source>
        <strain>cv. Columbia</strain>
    </source>
</reference>
<reference key="5">
    <citation type="journal article" date="2003" name="Science">
        <title>Empirical analysis of transcriptional activity in the Arabidopsis genome.</title>
        <authorList>
            <person name="Yamada K."/>
            <person name="Lim J."/>
            <person name="Dale J.M."/>
            <person name="Chen H."/>
            <person name="Shinn P."/>
            <person name="Palm C.J."/>
            <person name="Southwick A.M."/>
            <person name="Wu H.C."/>
            <person name="Kim C.J."/>
            <person name="Nguyen M."/>
            <person name="Pham P.K."/>
            <person name="Cheuk R.F."/>
            <person name="Karlin-Newmann G."/>
            <person name="Liu S.X."/>
            <person name="Lam B."/>
            <person name="Sakano H."/>
            <person name="Wu T."/>
            <person name="Yu G."/>
            <person name="Miranda M."/>
            <person name="Quach H.L."/>
            <person name="Tripp M."/>
            <person name="Chang C.H."/>
            <person name="Lee J.M."/>
            <person name="Toriumi M.J."/>
            <person name="Chan M.M."/>
            <person name="Tang C.C."/>
            <person name="Onodera C.S."/>
            <person name="Deng J.M."/>
            <person name="Akiyama K."/>
            <person name="Ansari Y."/>
            <person name="Arakawa T."/>
            <person name="Banh J."/>
            <person name="Banno F."/>
            <person name="Bowser L."/>
            <person name="Brooks S.Y."/>
            <person name="Carninci P."/>
            <person name="Chao Q."/>
            <person name="Choy N."/>
            <person name="Enju A."/>
            <person name="Goldsmith A.D."/>
            <person name="Gurjal M."/>
            <person name="Hansen N.F."/>
            <person name="Hayashizaki Y."/>
            <person name="Johnson-Hopson C."/>
            <person name="Hsuan V.W."/>
            <person name="Iida K."/>
            <person name="Karnes M."/>
            <person name="Khan S."/>
            <person name="Koesema E."/>
            <person name="Ishida J."/>
            <person name="Jiang P.X."/>
            <person name="Jones T."/>
            <person name="Kawai J."/>
            <person name="Kamiya A."/>
            <person name="Meyers C."/>
            <person name="Nakajima M."/>
            <person name="Narusaka M."/>
            <person name="Seki M."/>
            <person name="Sakurai T."/>
            <person name="Satou M."/>
            <person name="Tamse R."/>
            <person name="Vaysberg M."/>
            <person name="Wallender E.K."/>
            <person name="Wong C."/>
            <person name="Yamamura Y."/>
            <person name="Yuan S."/>
            <person name="Shinozaki K."/>
            <person name="Davis R.W."/>
            <person name="Theologis A."/>
            <person name="Ecker J.R."/>
        </authorList>
    </citation>
    <scope>NUCLEOTIDE SEQUENCE [LARGE SCALE MRNA]</scope>
    <source>
        <strain>cv. Columbia</strain>
    </source>
</reference>
<reference key="6">
    <citation type="submission" date="1998-08" db="EMBL/GenBank/DDBJ databases">
        <title>Signal peptide selection derived cDNAs from Arabidopsis thaliana leaves and guard cells.</title>
        <authorList>
            <person name="Stracke R."/>
            <person name="Palme K."/>
        </authorList>
    </citation>
    <scope>NUCLEOTIDE SEQUENCE [LARGE SCALE MRNA] OF 1-226</scope>
</reference>
<reference key="7">
    <citation type="journal article" date="2005" name="Mol. Ecol.">
        <title>Nucleotide variation at the myrosinase-encoding locus, TGG1, and quantitative myrosinase enzyme activity variation in Arabidopsis thaliana.</title>
        <authorList>
            <person name="Stranger B.E."/>
            <person name="Mitchell-Olds T."/>
        </authorList>
    </citation>
    <scope>NUCLEOTIDE SEQUENCE [GENOMIC DNA] OF 18-497; 43-510; 43-511; 43-512; 43-513; 43-514; 44-511; 44-512; 44-514; 44-522; 45-511 AND 47-512</scope>
    <scope>FUNCTION</scope>
    <scope>VARIANTS ASN-128; LYS-261; GLN-264; ALA-427; GLY-459 AND ILE-489</scope>
    <source>
        <strain>cv. Abd-0</strain>
        <strain>cv. Ag-0</strain>
        <strain>cv. Ba-1</strain>
        <strain>cv. Cal-0</strain>
        <strain>cv. Columbia</strain>
        <strain>cv. Cvi-0</strain>
        <strain>cv. Db-1</strain>
        <strain>cv. Ei-2</strain>
        <strain>cv. HOG</strain>
        <strain>cv. Ka-0</strain>
        <strain>cv. Ler-1</strain>
        <strain>cv. Lip-0</strain>
        <strain>cv. Ll-0</strain>
        <strain>cv. Mh-0</strain>
        <strain>cv. Mr-0</strain>
        <strain>cv. Mrk-0</strain>
        <strain>cv. Mt-0</strain>
        <strain>cv. No-0</strain>
        <strain>cv. Per-1</strain>
        <strain>cv. Petergof</strain>
        <strain>cv. Pi-0</strain>
        <strain>cv. Rsch-0</strain>
        <strain>cv. Sei-0</strain>
        <strain>cv. Su-0</strain>
        <strain>cv. Ta-0</strain>
        <strain>cv. Tac-0</strain>
        <strain>cv. Tsu-1</strain>
        <strain>cv. Wl-0</strain>
    </source>
</reference>
<reference key="8">
    <citation type="journal article" date="2009" name="DNA Res.">
        <title>Analysis of multiple occurrences of alternative splicing events in Arabidopsis thaliana using novel sequenced full-length cDNAs.</title>
        <authorList>
            <person name="Iida K."/>
            <person name="Fukami-Kobayashi K."/>
            <person name="Toyoda A."/>
            <person name="Sakaki Y."/>
            <person name="Kobayashi M."/>
            <person name="Seki M."/>
            <person name="Shinozaki K."/>
        </authorList>
    </citation>
    <scope>NUCLEOTIDE SEQUENCE [LARGE SCALE MRNA] OF 101-541</scope>
    <source>
        <strain>cv. Columbia</strain>
    </source>
</reference>
<reference key="9">
    <citation type="journal article" date="1993" name="Plant J.">
        <title>An inventory of 1152 expressed sequence tags obtained by partial sequencing of cDNAs from Arabidopsis thaliana.</title>
        <authorList>
            <person name="Hoefte H."/>
            <person name="Desprez T."/>
            <person name="Amselem J."/>
            <person name="Chiapello H."/>
            <person name="Rouze P."/>
            <person name="Caboche M."/>
            <person name="Moisan A."/>
            <person name="Jourjon M.-F."/>
            <person name="Charpenteau J.-L."/>
            <person name="Berthomieu P."/>
            <person name="Guerrier D."/>
            <person name="Giraudat J."/>
            <person name="Quigley F."/>
            <person name="Thomas F."/>
            <person name="Yu D.-Y."/>
            <person name="Mache R."/>
            <person name="Raynal M."/>
            <person name="Cooke R."/>
            <person name="Grellet F."/>
            <person name="Delseny M."/>
            <person name="Parmentier Y."/>
            <person name="de Marcillac G."/>
            <person name="Gigot C."/>
            <person name="Fleck J."/>
            <person name="Philipps G."/>
            <person name="Axelos M."/>
            <person name="Bardet C."/>
            <person name="Tremousaygue D."/>
            <person name="Lescure B."/>
        </authorList>
    </citation>
    <scope>NUCLEOTIDE SEQUENCE [LARGE SCALE MRNA] OF 192-250</scope>
    <source>
        <strain>cv. C24</strain>
        <tissue>Flower bud</tissue>
    </source>
</reference>
<reference key="10">
    <citation type="journal article" date="2004" name="Plant Mol. Biol.">
        <title>Cell specific, cross-species expression of myrosinases in Brassica napus, Arabidopsis thaliana and Nicotiana tabacum.</title>
        <authorList>
            <person name="Thangstad O.P."/>
            <person name="Gilde B."/>
            <person name="Chadchawan S."/>
            <person name="Seem M."/>
            <person name="Husebye H."/>
            <person name="Bradley D."/>
            <person name="Bones A.M."/>
        </authorList>
    </citation>
    <scope>TISSUE SPECIFICITY</scope>
</reference>
<reference key="11">
    <citation type="journal article" date="2004" name="Plant Mol. Biol.">
        <title>Functional genomic analysis of Arabidopsis thaliana glycoside hydrolase family 1.</title>
        <authorList>
            <person name="Xu Z."/>
            <person name="Escamilla-Trevino L.L."/>
            <person name="Zeng L."/>
            <person name="Lalgondar M."/>
            <person name="Bevan D.R."/>
            <person name="Winkel B.S.J."/>
            <person name="Mohamed A."/>
            <person name="Cheng C.-L."/>
            <person name="Shih M.-C."/>
            <person name="Poulton J.E."/>
            <person name="Esen A."/>
        </authorList>
    </citation>
    <scope>GENE FAMILY</scope>
    <scope>NOMENCLATURE</scope>
</reference>
<reference key="12">
    <citation type="journal article" date="2006" name="Plant J.">
        <title>Arabidopsis myrosinases TGG1 and TGG2 have redundant function in glucosinolate breakdown and insect defense.</title>
        <authorList>
            <person name="Barth C."/>
            <person name="Jander G."/>
        </authorList>
    </citation>
    <scope>FUNCTION</scope>
</reference>
<reference key="13">
    <citation type="journal article" date="2007" name="Plant Cell">
        <title>Proteome analysis of Arabidopsis leaf peroxisomes reveals novel targeting peptides, metabolic pathways, and defense mechanisms.</title>
        <authorList>
            <person name="Reumann S."/>
            <person name="Babujee L."/>
            <person name="Ma C."/>
            <person name="Wienkoop S."/>
            <person name="Siemsen T."/>
            <person name="Antonicelli G.E."/>
            <person name="Rasche N."/>
            <person name="Lueder F."/>
            <person name="Weckwerth W."/>
            <person name="Jahn O."/>
        </authorList>
    </citation>
    <scope>IDENTIFICATION BY MASS SPECTROMETRY</scope>
</reference>
<reference key="14">
    <citation type="journal article" date="2009" name="Phytochemistry">
        <title>Myrosinases from root and leaves of Arabidopsis thaliana have different catalytic properties.</title>
        <authorList>
            <person name="Andersson D."/>
            <person name="Chakrabarty R."/>
            <person name="Bejai S."/>
            <person name="Zhang J."/>
            <person name="Rask L."/>
            <person name="Meijer J."/>
        </authorList>
    </citation>
    <scope>FUNCTION</scope>
    <scope>CATALYTIC ACTIVITY</scope>
    <scope>BIOPHYSICOCHEMICAL PROPERTIES</scope>
</reference>
<reference key="15">
    <citation type="journal article" date="2009" name="Plant Cell Physiol.">
        <title>Myrosinases, TGG1 and TGG2, redundantly function in ABA and MeJA signaling in Arabidopsis guard cells.</title>
        <authorList>
            <person name="Islam M.M."/>
            <person name="Tani C."/>
            <person name="Watanabe-Sugimoto M."/>
            <person name="Uraji M."/>
            <person name="Jahan M.S."/>
            <person name="Masuda C."/>
            <person name="Nakamura Y."/>
            <person name="Mori I.C."/>
            <person name="Murata Y."/>
        </authorList>
    </citation>
    <scope>FUNCTION</scope>
</reference>
<proteinExistence type="evidence at protein level"/>
<feature type="signal peptide" evidence="7">
    <location>
        <begin position="1"/>
        <end position="19"/>
    </location>
</feature>
<feature type="chain" id="PRO_0000011773" description="Myrosinase 1">
    <location>
        <begin position="20"/>
        <end position="541"/>
    </location>
</feature>
<feature type="active site" description="Nucleophile" evidence="9">
    <location>
        <position position="420"/>
    </location>
</feature>
<feature type="binding site" evidence="3">
    <location>
        <position position="57"/>
    </location>
    <ligand>
        <name>a beta-D-glucoside</name>
        <dbReference type="ChEBI" id="CHEBI:22798"/>
    </ligand>
</feature>
<feature type="binding site" evidence="3">
    <location>
        <position position="159"/>
    </location>
    <ligand>
        <name>a beta-D-glucoside</name>
        <dbReference type="ChEBI" id="CHEBI:22798"/>
    </ligand>
</feature>
<feature type="binding site" evidence="4">
    <location>
        <begin position="204"/>
        <end position="205"/>
    </location>
    <ligand>
        <name>a beta-D-glucoside</name>
        <dbReference type="ChEBI" id="CHEBI:22798"/>
    </ligand>
</feature>
<feature type="binding site" evidence="3">
    <location>
        <position position="348"/>
    </location>
    <ligand>
        <name>a beta-D-glucoside</name>
        <dbReference type="ChEBI" id="CHEBI:22798"/>
    </ligand>
</feature>
<feature type="binding site" evidence="6">
    <location>
        <position position="420"/>
    </location>
    <ligand>
        <name>a beta-D-glucoside</name>
        <dbReference type="ChEBI" id="CHEBI:22798"/>
    </ligand>
</feature>
<feature type="binding site" evidence="3">
    <location>
        <position position="468"/>
    </location>
    <ligand>
        <name>a beta-D-glucoside</name>
        <dbReference type="ChEBI" id="CHEBI:22798"/>
    </ligand>
</feature>
<feature type="binding site" evidence="5">
    <location>
        <begin position="475"/>
        <end position="476"/>
    </location>
    <ligand>
        <name>a beta-D-glucoside</name>
        <dbReference type="ChEBI" id="CHEBI:22798"/>
    </ligand>
</feature>
<feature type="binding site" evidence="2">
    <location>
        <position position="484"/>
    </location>
    <ligand>
        <name>a beta-D-glucoside</name>
        <dbReference type="ChEBI" id="CHEBI:22798"/>
    </ligand>
</feature>
<feature type="glycosylation site" description="N-linked (GlcNAc...) asparagine" evidence="8">
    <location>
        <position position="33"/>
    </location>
</feature>
<feature type="glycosylation site" description="N-linked (GlcNAc...) asparagine" evidence="8">
    <location>
        <position position="108"/>
    </location>
</feature>
<feature type="glycosylation site" description="N-linked (GlcNAc...) asparagine" evidence="8">
    <location>
        <position position="175"/>
    </location>
</feature>
<feature type="glycosylation site" description="N-linked (GlcNAc...) asparagine" evidence="8">
    <location>
        <position position="236"/>
    </location>
</feature>
<feature type="glycosylation site" description="N-linked (GlcNAc...) asparagine" evidence="8">
    <location>
        <position position="356"/>
    </location>
</feature>
<feature type="glycosylation site" description="N-linked (GlcNAc...) asparagine" evidence="8">
    <location>
        <position position="379"/>
    </location>
</feature>
<feature type="glycosylation site" description="N-linked (GlcNAc...) asparagine" evidence="8">
    <location>
        <position position="493"/>
    </location>
</feature>
<feature type="glycosylation site" description="N-linked (GlcNAc...) asparagine" evidence="8">
    <location>
        <position position="512"/>
    </location>
</feature>
<feature type="disulfide bond" evidence="1">
    <location>
        <begin position="24"/>
        <end position="449"/>
    </location>
</feature>
<feature type="disulfide bond" evidence="1">
    <location>
        <begin position="32"/>
        <end position="445"/>
    </location>
</feature>
<feature type="disulfide bond" evidence="3">
    <location>
        <begin position="224"/>
        <end position="232"/>
    </location>
</feature>
<feature type="splice variant" id="VSP_038446" description="In isoform 2." evidence="17">
    <location>
        <begin position="457"/>
        <end position="541"/>
    </location>
</feature>
<feature type="sequence variant" description="In strain: cv. Ta-0." evidence="11">
    <original>S</original>
    <variation>N</variation>
    <location>
        <position position="128"/>
    </location>
</feature>
<feature type="sequence variant" description="In strain: cv. Ba-1." evidence="11">
    <original>T</original>
    <variation>K</variation>
    <location>
        <position position="261"/>
    </location>
</feature>
<feature type="sequence variant" description="In strain: cv. Ba-1." evidence="11">
    <original>K</original>
    <variation>Q</variation>
    <location>
        <position position="264"/>
    </location>
</feature>
<feature type="sequence variant" description="In strain: cv. Ag-0, cv. Ba-1, cv. Mh-0, cv. Mr-0 and Tac-0." evidence="11">
    <original>G</original>
    <variation>A</variation>
    <location>
        <position position="427"/>
    </location>
</feature>
<feature type="sequence variant" description="In strain: cv. Su-0." evidence="11">
    <original>N</original>
    <variation>G</variation>
    <location>
        <position position="459"/>
    </location>
</feature>
<feature type="sequence variant" description="In strain: cv. No-0, cv. Rsch-0 and cv. Ta-0." evidence="11">
    <original>V</original>
    <variation>I</variation>
    <location>
        <position position="489"/>
    </location>
</feature>
<feature type="sequence conflict" description="In Ref. 5; AAL06896." evidence="17" ref="5">
    <original>P</original>
    <variation>H</variation>
    <location>
        <position position="385"/>
    </location>
</feature>
<feature type="sequence conflict" description="In Ref. 5; AAL25596." evidence="17" ref="5">
    <original>P</original>
    <variation>A</variation>
    <location>
        <position position="426"/>
    </location>
</feature>
<feature type="sequence conflict" description="In Ref. 8; BAH20253." evidence="17" ref="8">
    <original>A</original>
    <variation>T</variation>
    <location>
        <position position="434"/>
    </location>
</feature>
<feature type="sequence conflict" description="In Ref. 8; BAH20253." evidence="17" ref="8">
    <original>I</original>
    <variation>N</variation>
    <location>
        <position position="441"/>
    </location>
</feature>
<feature type="strand" evidence="20">
    <location>
        <begin position="27"/>
        <end position="29"/>
    </location>
</feature>
<feature type="turn" evidence="20">
    <location>
        <begin position="35"/>
        <end position="37"/>
    </location>
</feature>
<feature type="helix" evidence="20">
    <location>
        <begin position="40"/>
        <end position="42"/>
    </location>
</feature>
<feature type="strand" evidence="20">
    <location>
        <begin position="48"/>
        <end position="52"/>
    </location>
</feature>
<feature type="helix" evidence="20">
    <location>
        <begin position="55"/>
        <end position="58"/>
    </location>
</feature>
<feature type="helix" evidence="20">
    <location>
        <begin position="68"/>
        <end position="75"/>
    </location>
</feature>
<feature type="turn" evidence="20">
    <location>
        <begin position="77"/>
        <end position="80"/>
    </location>
</feature>
<feature type="strand" evidence="20">
    <location>
        <begin position="87"/>
        <end position="89"/>
    </location>
</feature>
<feature type="turn" evidence="20">
    <location>
        <begin position="93"/>
        <end position="95"/>
    </location>
</feature>
<feature type="helix" evidence="20">
    <location>
        <begin position="97"/>
        <end position="107"/>
    </location>
</feature>
<feature type="strand" evidence="20">
    <location>
        <begin position="110"/>
        <end position="115"/>
    </location>
</feature>
<feature type="helix" evidence="20">
    <location>
        <begin position="118"/>
        <end position="121"/>
    </location>
</feature>
<feature type="helix" evidence="20">
    <location>
        <begin position="127"/>
        <end position="129"/>
    </location>
</feature>
<feature type="helix" evidence="20">
    <location>
        <begin position="133"/>
        <end position="148"/>
    </location>
</feature>
<feature type="strand" evidence="20">
    <location>
        <begin position="152"/>
        <end position="160"/>
    </location>
</feature>
<feature type="helix" evidence="20">
    <location>
        <begin position="164"/>
        <end position="170"/>
    </location>
</feature>
<feature type="helix" evidence="20">
    <location>
        <begin position="172"/>
        <end position="174"/>
    </location>
</feature>
<feature type="helix" evidence="20">
    <location>
        <begin position="177"/>
        <end position="193"/>
    </location>
</feature>
<feature type="turn" evidence="20">
    <location>
        <begin position="194"/>
        <end position="196"/>
    </location>
</feature>
<feature type="strand" evidence="20">
    <location>
        <begin position="199"/>
        <end position="204"/>
    </location>
</feature>
<feature type="helix" evidence="20">
    <location>
        <begin position="208"/>
        <end position="212"/>
    </location>
</feature>
<feature type="turn" evidence="20">
    <location>
        <begin position="213"/>
        <end position="215"/>
    </location>
</feature>
<feature type="turn" evidence="20">
    <location>
        <begin position="226"/>
        <end position="228"/>
    </location>
</feature>
<feature type="turn" evidence="20">
    <location>
        <begin position="237"/>
        <end position="239"/>
    </location>
</feature>
<feature type="helix" evidence="20">
    <location>
        <begin position="240"/>
        <end position="262"/>
    </location>
</feature>
<feature type="turn" evidence="20">
    <location>
        <begin position="263"/>
        <end position="266"/>
    </location>
</feature>
<feature type="strand" evidence="20">
    <location>
        <begin position="274"/>
        <end position="286"/>
    </location>
</feature>
<feature type="helix" evidence="20">
    <location>
        <begin position="287"/>
        <end position="300"/>
    </location>
</feature>
<feature type="helix" evidence="20">
    <location>
        <begin position="302"/>
        <end position="310"/>
    </location>
</feature>
<feature type="helix" evidence="20">
    <location>
        <begin position="315"/>
        <end position="321"/>
    </location>
</feature>
<feature type="helix" evidence="20">
    <location>
        <begin position="322"/>
        <end position="324"/>
    </location>
</feature>
<feature type="helix" evidence="20">
    <location>
        <begin position="330"/>
        <end position="336"/>
    </location>
</feature>
<feature type="strand" evidence="20">
    <location>
        <begin position="343"/>
        <end position="355"/>
    </location>
</feature>
<feature type="turn" evidence="20">
    <location>
        <begin position="362"/>
        <end position="364"/>
    </location>
</feature>
<feature type="helix" evidence="20">
    <location>
        <begin position="367"/>
        <end position="371"/>
    </location>
</feature>
<feature type="strand" evidence="20">
    <location>
        <begin position="373"/>
        <end position="378"/>
    </location>
</feature>
<feature type="strand" evidence="20">
    <location>
        <begin position="385"/>
        <end position="390"/>
    </location>
</feature>
<feature type="helix" evidence="20">
    <location>
        <begin position="398"/>
        <end position="410"/>
    </location>
</feature>
<feature type="strand" evidence="20">
    <location>
        <begin position="411"/>
        <end position="413"/>
    </location>
</feature>
<feature type="strand" evidence="20">
    <location>
        <begin position="416"/>
        <end position="421"/>
    </location>
</feature>
<feature type="helix" evidence="20">
    <location>
        <begin position="431"/>
        <end position="435"/>
    </location>
</feature>
<feature type="helix" evidence="20">
    <location>
        <begin position="438"/>
        <end position="457"/>
    </location>
</feature>
<feature type="strand" evidence="20">
    <location>
        <begin position="462"/>
        <end position="468"/>
    </location>
</feature>
<feature type="turn" evidence="20">
    <location>
        <begin position="476"/>
        <end position="478"/>
    </location>
</feature>
<feature type="strand" evidence="20">
    <location>
        <begin position="481"/>
        <end position="483"/>
    </location>
</feature>
<feature type="helix" evidence="20">
    <location>
        <begin position="491"/>
        <end position="493"/>
    </location>
</feature>
<feature type="helix" evidence="20">
    <location>
        <begin position="502"/>
        <end position="511"/>
    </location>
</feature>
<dbReference type="EC" id="3.2.1.147" evidence="14"/>
<dbReference type="EC" id="3.2.1.21" evidence="14"/>
<dbReference type="EMBL" id="L11454">
    <property type="protein sequence ID" value="AAC18869.1"/>
    <property type="molecule type" value="mRNA"/>
</dbReference>
<dbReference type="EMBL" id="X79194">
    <property type="protein sequence ID" value="CAA55786.1"/>
    <property type="molecule type" value="Genomic_DNA"/>
</dbReference>
<dbReference type="EMBL" id="AF149413">
    <property type="protein sequence ID" value="AAD40143.1"/>
    <property type="molecule type" value="Genomic_DNA"/>
</dbReference>
<dbReference type="EMBL" id="CP002688">
    <property type="protein sequence ID" value="AED93511.1"/>
    <property type="molecule type" value="Genomic_DNA"/>
</dbReference>
<dbReference type="EMBL" id="CP002688">
    <property type="protein sequence ID" value="AED93512.1"/>
    <property type="molecule type" value="Genomic_DNA"/>
</dbReference>
<dbReference type="EMBL" id="AY045681">
    <property type="protein sequence ID" value="AAK74039.1"/>
    <property type="molecule type" value="mRNA"/>
</dbReference>
<dbReference type="EMBL" id="AY054237">
    <property type="protein sequence ID" value="AAL06896.1"/>
    <property type="molecule type" value="mRNA"/>
</dbReference>
<dbReference type="EMBL" id="AY058182">
    <property type="protein sequence ID" value="AAL25596.1"/>
    <property type="molecule type" value="mRNA"/>
</dbReference>
<dbReference type="EMBL" id="AY090382">
    <property type="protein sequence ID" value="AAL91284.1"/>
    <property type="molecule type" value="mRNA"/>
</dbReference>
<dbReference type="EMBL" id="AF083677">
    <property type="protein sequence ID" value="AAN60236.1"/>
    <property type="molecule type" value="mRNA"/>
</dbReference>
<dbReference type="EMBL" id="AJ831440">
    <property type="protein sequence ID" value="CAH40799.1"/>
    <property type="molecule type" value="Genomic_DNA"/>
</dbReference>
<dbReference type="EMBL" id="AJ831441">
    <property type="protein sequence ID" value="CAH40800.1"/>
    <property type="molecule type" value="Genomic_DNA"/>
</dbReference>
<dbReference type="EMBL" id="AJ831442">
    <property type="protein sequence ID" value="CAH40801.1"/>
    <property type="molecule type" value="Genomic_DNA"/>
</dbReference>
<dbReference type="EMBL" id="AJ831443">
    <property type="protein sequence ID" value="CAH40802.1"/>
    <property type="molecule type" value="Genomic_DNA"/>
</dbReference>
<dbReference type="EMBL" id="AJ831444">
    <property type="protein sequence ID" value="CAH40803.1"/>
    <property type="molecule type" value="Genomic_DNA"/>
</dbReference>
<dbReference type="EMBL" id="AJ831445">
    <property type="protein sequence ID" value="CAH40804.1"/>
    <property type="molecule type" value="Genomic_DNA"/>
</dbReference>
<dbReference type="EMBL" id="AJ831446">
    <property type="protein sequence ID" value="CAH40805.1"/>
    <property type="molecule type" value="Genomic_DNA"/>
</dbReference>
<dbReference type="EMBL" id="AJ831447">
    <property type="protein sequence ID" value="CAH40806.1"/>
    <property type="molecule type" value="Genomic_DNA"/>
</dbReference>
<dbReference type="EMBL" id="AJ831448">
    <property type="protein sequence ID" value="CAH40807.1"/>
    <property type="molecule type" value="Genomic_DNA"/>
</dbReference>
<dbReference type="EMBL" id="AJ831449">
    <property type="protein sequence ID" value="CAH40808.1"/>
    <property type="molecule type" value="Genomic_DNA"/>
</dbReference>
<dbReference type="EMBL" id="AJ831450">
    <property type="protein sequence ID" value="CAH40809.1"/>
    <property type="molecule type" value="Genomic_DNA"/>
</dbReference>
<dbReference type="EMBL" id="AJ831451">
    <property type="protein sequence ID" value="CAH40810.1"/>
    <property type="molecule type" value="Genomic_DNA"/>
</dbReference>
<dbReference type="EMBL" id="AJ831452">
    <property type="protein sequence ID" value="CAH40811.1"/>
    <property type="molecule type" value="Genomic_DNA"/>
</dbReference>
<dbReference type="EMBL" id="AJ831453">
    <property type="protein sequence ID" value="CAH40812.1"/>
    <property type="molecule type" value="Genomic_DNA"/>
</dbReference>
<dbReference type="EMBL" id="AJ831454">
    <property type="protein sequence ID" value="CAH40813.1"/>
    <property type="molecule type" value="Genomic_DNA"/>
</dbReference>
<dbReference type="EMBL" id="AJ831455">
    <property type="protein sequence ID" value="CAH40814.1"/>
    <property type="molecule type" value="Genomic_DNA"/>
</dbReference>
<dbReference type="EMBL" id="AJ831456">
    <property type="protein sequence ID" value="CAH40815.1"/>
    <property type="molecule type" value="Genomic_DNA"/>
</dbReference>
<dbReference type="EMBL" id="AJ831457">
    <property type="protein sequence ID" value="CAH40816.1"/>
    <property type="molecule type" value="Genomic_DNA"/>
</dbReference>
<dbReference type="EMBL" id="AJ831458">
    <property type="protein sequence ID" value="CAH40817.1"/>
    <property type="molecule type" value="Genomic_DNA"/>
</dbReference>
<dbReference type="EMBL" id="AJ831459">
    <property type="protein sequence ID" value="CAH40818.1"/>
    <property type="molecule type" value="Genomic_DNA"/>
</dbReference>
<dbReference type="EMBL" id="AJ831460">
    <property type="protein sequence ID" value="CAH40819.1"/>
    <property type="molecule type" value="Genomic_DNA"/>
</dbReference>
<dbReference type="EMBL" id="AJ831461">
    <property type="protein sequence ID" value="CAH40820.1"/>
    <property type="molecule type" value="Genomic_DNA"/>
</dbReference>
<dbReference type="EMBL" id="AJ831462">
    <property type="protein sequence ID" value="CAH40821.1"/>
    <property type="molecule type" value="Genomic_DNA"/>
</dbReference>
<dbReference type="EMBL" id="AJ831463">
    <property type="protein sequence ID" value="CAH40822.1"/>
    <property type="molecule type" value="Genomic_DNA"/>
</dbReference>
<dbReference type="EMBL" id="AJ831464">
    <property type="protein sequence ID" value="CAH40823.1"/>
    <property type="molecule type" value="Genomic_DNA"/>
</dbReference>
<dbReference type="EMBL" id="AJ831465">
    <property type="protein sequence ID" value="CAH40824.1"/>
    <property type="molecule type" value="Genomic_DNA"/>
</dbReference>
<dbReference type="EMBL" id="AJ831466">
    <property type="protein sequence ID" value="CAH40825.1"/>
    <property type="molecule type" value="Genomic_DNA"/>
</dbReference>
<dbReference type="EMBL" id="AJ831467">
    <property type="protein sequence ID" value="CAH40826.1"/>
    <property type="molecule type" value="Genomic_DNA"/>
</dbReference>
<dbReference type="EMBL" id="AK317589">
    <property type="protein sequence ID" value="BAH20253.1"/>
    <property type="molecule type" value="mRNA"/>
</dbReference>
<dbReference type="EMBL" id="Z18232">
    <property type="protein sequence ID" value="CAA79143.1"/>
    <property type="molecule type" value="mRNA"/>
</dbReference>
<dbReference type="PIR" id="S56653">
    <property type="entry name" value="S56653"/>
</dbReference>
<dbReference type="RefSeq" id="NP_197972.2">
    <molecule id="P37702-2"/>
    <property type="nucleotide sequence ID" value="NM_122501.3"/>
</dbReference>
<dbReference type="RefSeq" id="NP_851077.1">
    <molecule id="P37702-1"/>
    <property type="nucleotide sequence ID" value="NM_180746.3"/>
</dbReference>
<dbReference type="PDB" id="7Z1I">
    <property type="method" value="X-ray"/>
    <property type="resolution" value="3.09 A"/>
    <property type="chains" value="A/B/C/D=19-541"/>
</dbReference>
<dbReference type="PDBsum" id="7Z1I"/>
<dbReference type="SMR" id="P37702"/>
<dbReference type="BioGRID" id="17944">
    <property type="interactions" value="7"/>
</dbReference>
<dbReference type="FunCoup" id="P37702">
    <property type="interactions" value="230"/>
</dbReference>
<dbReference type="IntAct" id="P37702">
    <property type="interactions" value="1"/>
</dbReference>
<dbReference type="STRING" id="3702.P37702"/>
<dbReference type="CAZy" id="GH1">
    <property type="family name" value="Glycoside Hydrolase Family 1"/>
</dbReference>
<dbReference type="GlyCosmos" id="P37702">
    <property type="glycosylation" value="8 sites, No reported glycans"/>
</dbReference>
<dbReference type="GlyGen" id="P37702">
    <property type="glycosylation" value="8 sites"/>
</dbReference>
<dbReference type="iPTMnet" id="P37702"/>
<dbReference type="MetOSite" id="P37702"/>
<dbReference type="PaxDb" id="3702-AT5G26000.1"/>
<dbReference type="ProteomicsDB" id="240394">
    <molecule id="P37702-1"/>
</dbReference>
<dbReference type="EnsemblPlants" id="AT5G26000.1">
    <molecule id="P37702-1"/>
    <property type="protein sequence ID" value="AT5G26000.1"/>
    <property type="gene ID" value="AT5G26000"/>
</dbReference>
<dbReference type="EnsemblPlants" id="AT5G26000.2">
    <molecule id="P37702-2"/>
    <property type="protein sequence ID" value="AT5G26000.2"/>
    <property type="gene ID" value="AT5G26000"/>
</dbReference>
<dbReference type="GeneID" id="832669"/>
<dbReference type="Gramene" id="AT5G26000.1">
    <molecule id="P37702-1"/>
    <property type="protein sequence ID" value="AT5G26000.1"/>
    <property type="gene ID" value="AT5G26000"/>
</dbReference>
<dbReference type="Gramene" id="AT5G26000.2">
    <molecule id="P37702-2"/>
    <property type="protein sequence ID" value="AT5G26000.2"/>
    <property type="gene ID" value="AT5G26000"/>
</dbReference>
<dbReference type="KEGG" id="ath:AT5G26000"/>
<dbReference type="Araport" id="AT5G26000"/>
<dbReference type="TAIR" id="AT5G26000">
    <property type="gene designation" value="TGG1"/>
</dbReference>
<dbReference type="eggNOG" id="KOG0626">
    <property type="taxonomic scope" value="Eukaryota"/>
</dbReference>
<dbReference type="HOGENOM" id="CLU_001859_1_0_1"/>
<dbReference type="InParanoid" id="P37702"/>
<dbReference type="OMA" id="MRFLVED"/>
<dbReference type="PhylomeDB" id="P37702"/>
<dbReference type="BioCyc" id="MetaCyc:AT5G26000-MONOMER"/>
<dbReference type="BRENDA" id="3.2.1.147">
    <property type="organism ID" value="399"/>
</dbReference>
<dbReference type="SABIO-RK" id="P37702"/>
<dbReference type="CD-CODE" id="4299E36E">
    <property type="entry name" value="Nucleolus"/>
</dbReference>
<dbReference type="PRO" id="PR:P37702"/>
<dbReference type="Proteomes" id="UP000006548">
    <property type="component" value="Chromosome 5"/>
</dbReference>
<dbReference type="ExpressionAtlas" id="P37702">
    <property type="expression patterns" value="baseline and differential"/>
</dbReference>
<dbReference type="GO" id="GO:0048046">
    <property type="term" value="C:apoplast"/>
    <property type="evidence" value="ECO:0007005"/>
    <property type="project" value="TAIR"/>
</dbReference>
<dbReference type="GO" id="GO:0009507">
    <property type="term" value="C:chloroplast"/>
    <property type="evidence" value="ECO:0007005"/>
    <property type="project" value="TAIR"/>
</dbReference>
<dbReference type="GO" id="GO:0022626">
    <property type="term" value="C:cytosolic ribosome"/>
    <property type="evidence" value="ECO:0007005"/>
    <property type="project" value="TAIR"/>
</dbReference>
<dbReference type="GO" id="GO:0005777">
    <property type="term" value="C:peroxisome"/>
    <property type="evidence" value="ECO:0007005"/>
    <property type="project" value="TAIR"/>
</dbReference>
<dbReference type="GO" id="GO:0000325">
    <property type="term" value="C:plant-type vacuole"/>
    <property type="evidence" value="ECO:0007005"/>
    <property type="project" value="TAIR"/>
</dbReference>
<dbReference type="GO" id="GO:0009536">
    <property type="term" value="C:plastid"/>
    <property type="evidence" value="ECO:0007005"/>
    <property type="project" value="TAIR"/>
</dbReference>
<dbReference type="GO" id="GO:0099503">
    <property type="term" value="C:secretory vesicle"/>
    <property type="evidence" value="ECO:0007005"/>
    <property type="project" value="TAIR"/>
</dbReference>
<dbReference type="GO" id="GO:0009579">
    <property type="term" value="C:thylakoid"/>
    <property type="evidence" value="ECO:0007005"/>
    <property type="project" value="TAIR"/>
</dbReference>
<dbReference type="GO" id="GO:0008422">
    <property type="term" value="F:beta-glucosidase activity"/>
    <property type="evidence" value="ECO:0000314"/>
    <property type="project" value="TAIR"/>
</dbReference>
<dbReference type="GO" id="GO:0046872">
    <property type="term" value="F:metal ion binding"/>
    <property type="evidence" value="ECO:0007669"/>
    <property type="project" value="UniProtKB-KW"/>
</dbReference>
<dbReference type="GO" id="GO:0019137">
    <property type="term" value="F:thioglucosidase activity"/>
    <property type="evidence" value="ECO:0000314"/>
    <property type="project" value="TAIR"/>
</dbReference>
<dbReference type="GO" id="GO:0009738">
    <property type="term" value="P:abscisic acid-activated signaling pathway"/>
    <property type="evidence" value="ECO:0007669"/>
    <property type="project" value="UniProtKB-KW"/>
</dbReference>
<dbReference type="GO" id="GO:0005975">
    <property type="term" value="P:carbohydrate metabolic process"/>
    <property type="evidence" value="ECO:0007669"/>
    <property type="project" value="InterPro"/>
</dbReference>
<dbReference type="GO" id="GO:0002213">
    <property type="term" value="P:defense response to insect"/>
    <property type="evidence" value="ECO:0000315"/>
    <property type="project" value="UniProtKB"/>
</dbReference>
<dbReference type="GO" id="GO:0019762">
    <property type="term" value="P:glucosinolate catabolic process"/>
    <property type="evidence" value="ECO:0000315"/>
    <property type="project" value="TAIR"/>
</dbReference>
<dbReference type="GO" id="GO:0010119">
    <property type="term" value="P:regulation of stomatal movement"/>
    <property type="evidence" value="ECO:0000315"/>
    <property type="project" value="UniProtKB"/>
</dbReference>
<dbReference type="GO" id="GO:0009737">
    <property type="term" value="P:response to abscisic acid"/>
    <property type="evidence" value="ECO:0000315"/>
    <property type="project" value="UniProtKB"/>
</dbReference>
<dbReference type="GO" id="GO:0009625">
    <property type="term" value="P:response to insect"/>
    <property type="evidence" value="ECO:0000270"/>
    <property type="project" value="TAIR"/>
</dbReference>
<dbReference type="FunFam" id="3.20.20.80:FF:000041">
    <property type="entry name" value="Beta-glucosidase 7"/>
    <property type="match status" value="1"/>
</dbReference>
<dbReference type="Gene3D" id="3.20.20.80">
    <property type="entry name" value="Glycosidases"/>
    <property type="match status" value="1"/>
</dbReference>
<dbReference type="InterPro" id="IPR001360">
    <property type="entry name" value="Glyco_hydro_1"/>
</dbReference>
<dbReference type="InterPro" id="IPR018120">
    <property type="entry name" value="Glyco_hydro_1_AS"/>
</dbReference>
<dbReference type="InterPro" id="IPR033132">
    <property type="entry name" value="Glyco_hydro_1_N_CS"/>
</dbReference>
<dbReference type="InterPro" id="IPR017853">
    <property type="entry name" value="Glycoside_hydrolase_SF"/>
</dbReference>
<dbReference type="PANTHER" id="PTHR10353">
    <property type="entry name" value="GLYCOSYL HYDROLASE"/>
    <property type="match status" value="1"/>
</dbReference>
<dbReference type="PANTHER" id="PTHR10353:SF218">
    <property type="entry name" value="MYROSINASE 1-RELATED"/>
    <property type="match status" value="1"/>
</dbReference>
<dbReference type="Pfam" id="PF00232">
    <property type="entry name" value="Glyco_hydro_1"/>
    <property type="match status" value="1"/>
</dbReference>
<dbReference type="PRINTS" id="PR00131">
    <property type="entry name" value="GLHYDRLASE1"/>
</dbReference>
<dbReference type="SUPFAM" id="SSF51445">
    <property type="entry name" value="(Trans)glycosidases"/>
    <property type="match status" value="1"/>
</dbReference>
<dbReference type="PROSITE" id="PS00572">
    <property type="entry name" value="GLYCOSYL_HYDROL_F1_1"/>
    <property type="match status" value="1"/>
</dbReference>
<dbReference type="PROSITE" id="PS00653">
    <property type="entry name" value="GLYCOSYL_HYDROL_F1_2"/>
    <property type="match status" value="1"/>
</dbReference>
<evidence type="ECO:0000250" key="1"/>
<evidence type="ECO:0000250" key="2">
    <source>
        <dbReference type="UniProtKB" id="Q1XH05"/>
    </source>
</evidence>
<evidence type="ECO:0000250" key="3">
    <source>
        <dbReference type="UniProtKB" id="Q7XSK0"/>
    </source>
</evidence>
<evidence type="ECO:0000250" key="4">
    <source>
        <dbReference type="UniProtKB" id="Q8GU20"/>
    </source>
</evidence>
<evidence type="ECO:0000250" key="5">
    <source>
        <dbReference type="UniProtKB" id="Q8L7J2"/>
    </source>
</evidence>
<evidence type="ECO:0000250" key="6">
    <source>
        <dbReference type="UniProtKB" id="Q9SPP9"/>
    </source>
</evidence>
<evidence type="ECO:0000255" key="7"/>
<evidence type="ECO:0000255" key="8">
    <source>
        <dbReference type="PROSITE-ProRule" id="PRU00498"/>
    </source>
</evidence>
<evidence type="ECO:0000255" key="9">
    <source>
        <dbReference type="PROSITE-ProRule" id="PRU10055"/>
    </source>
</evidence>
<evidence type="ECO:0000269" key="10">
    <source>
    </source>
</evidence>
<evidence type="ECO:0000269" key="11">
    <source>
    </source>
</evidence>
<evidence type="ECO:0000269" key="12">
    <source>
    </source>
</evidence>
<evidence type="ECO:0000269" key="13">
    <source>
    </source>
</evidence>
<evidence type="ECO:0000269" key="14">
    <source>
    </source>
</evidence>
<evidence type="ECO:0000303" key="15">
    <source>
    </source>
</evidence>
<evidence type="ECO:0000303" key="16">
    <source>
    </source>
</evidence>
<evidence type="ECO:0000305" key="17"/>
<evidence type="ECO:0000312" key="18">
    <source>
        <dbReference type="Araport" id="AT5G26000"/>
    </source>
</evidence>
<evidence type="ECO:0000312" key="19">
    <source>
        <dbReference type="EMBL" id="AAD40143.1"/>
    </source>
</evidence>
<evidence type="ECO:0007829" key="20">
    <source>
        <dbReference type="PDB" id="7Z1I"/>
    </source>
</evidence>
<comment type="function">
    <text evidence="11 12 13 14">Degradation of glucosinolates (glucose residue linked by a thioglucoside bound to an amino acid derivative) to glucose, sulfate and any of the products: thiocyanates, isothiocyanates, nitriles, epithionitriles or oxazolidine-2-thiones. These toxic degradation products can deter insect herbivores. Seems to function in abscisic acid (ABA) and methyl jasmonate (MeJA) signaling in guard cells. Functionally redundant with TGG2. Hydrolyzes sinigrin and, with lower efficiency, p-nitrophenyl beta-D-glucoside.</text>
</comment>
<comment type="catalytic activity">
    <reaction evidence="14">
        <text>a thioglucoside + H2O = a sugar + a thiol.</text>
        <dbReference type="EC" id="3.2.1.147"/>
    </reaction>
</comment>
<comment type="catalytic activity">
    <reaction evidence="14">
        <text>Hydrolysis of terminal, non-reducing beta-D-glucosyl residues with release of beta-D-glucose.</text>
        <dbReference type="EC" id="3.2.1.21"/>
    </reaction>
</comment>
<comment type="biophysicochemical properties">
    <kinetics>
        <KM evidence="14">45 uM for sinigrin (at pH 4.5)</KM>
        <KM evidence="14">34 mM for p-nitrophenyl beta-D-glucoside (at pH 4.5)</KM>
        <Vmax evidence="14">2.3 umol/min/mg enzyme with sinigrin as substrate (at pH 4.5)</Vmax>
        <Vmax evidence="14">1.2 umol/min/mg enzyme with p-nitrophenyl beta-D-glucoside as substrate (at pH 4.5)</Vmax>
    </kinetics>
</comment>
<comment type="subunit">
    <text evidence="1">Homodimer.</text>
</comment>
<comment type="subcellular location">
    <subcellularLocation>
        <location evidence="1">Vacuole</location>
    </subcellularLocation>
</comment>
<comment type="alternative products">
    <event type="alternative splicing"/>
    <isoform>
        <id>P37702-1</id>
        <name>1</name>
        <sequence type="displayed"/>
    </isoform>
    <isoform>
        <id>P37702-2</id>
        <name>2</name>
        <sequence type="described" ref="VSP_038446"/>
    </isoform>
</comment>
<comment type="tissue specificity">
    <text evidence="10">Expressed in guard cells, phloem-associated cells and myrosin cells.</text>
</comment>
<comment type="miscellaneous">
    <text>It seems that the absence of a catalytic proton donor in plant myrosinases is not impairing the hydrolysis of glucosinolates.</text>
</comment>
<comment type="similarity">
    <text evidence="17">Belongs to the glycosyl hydrolase 1 family.</text>
</comment>
<accession>P37702</accession>
<accession>B9DHN6</accession>
<accession>Q3E942</accession>
<accession>Q3V5A7</accession>
<accession>Q3V5A8</accession>
<accession>Q3V5A9</accession>
<accession>Q3V5B1</accession>
<accession>Q3V5B2</accession>
<accession>Q3V5B3</accession>
<accession>Q3V5B4</accession>
<accession>Q3V5B5</accession>
<accession>Q3V5B6</accession>
<accession>Q3V5B7</accession>
<accession>Q3V5B8</accession>
<accession>Q3V5B9</accession>
<accession>Q3V5C0</accession>
<accession>Q3V5C2</accession>
<accession>Q3V5C3</accession>
<accession>Q3V5C4</accession>
<accession>Q3V5C5</accession>
<accession>Q3V5C8</accession>
<accession>Q3V5D1</accession>
<accession>Q3V5D2</accession>
<accession>Q8H7H2</accession>
<accession>Q93Z31</accession>
<accession>Q940N8</accession>
<sequence>MKLLMLAFVFLLALATCKGDEFVCEENEPFTCNQTKLFNSGNFEKGFIFGVASSAYQVEGGRGRGLNVWDSFTHRFPEKGGADLGNGDTTCDSYTLWQKDIDVMDELNSTGYRFSIAWSRLLPKGKRSRGVNPGAIKYYNGLIDGLVAKNMTPFVTLFHWDLPQTLQDEYNGFLNKTIVDDFKDYADLCFELFGDRVKNWITINQLYTVPTRGYALGTDAPGRCSPKIDVRCPGGNSSTEPYIVAHNQLLAHAAAVDVYRTKYKDDQKGMIGPVMITRWFLPFDHSQESKDATERAKIFFHGWFMGPLTEGKYPDIMREYVGDRLPEFSETEAALVKGSYDFLGLNYYVTQYAQNNQTIVPSDVHTALMDSRTTLTSKNATGHAPGPPFNAASYYYPKGIYYVMDYFKTTYGDPLIYVTENGFSTPGDEDFEKATADYKRIDYLCSHLCFLSKVIKEKNVNVKGYFAWSLGDNYEFCNGFTVRFGLSYVDFANITGDRDLKASGKWFQKFINVTDEDSTNQDLLRSSVSSKNRDRKSLADA</sequence>
<gene>
    <name evidence="16" type="primary">TGG1</name>
    <name evidence="15" type="synonym">BGLU38</name>
    <name evidence="18" type="ordered locus">At5g26000</name>
    <name evidence="19" type="ORF">T1N24.7</name>
</gene>
<name>BGL38_ARATH</name>
<organism>
    <name type="scientific">Arabidopsis thaliana</name>
    <name type="common">Mouse-ear cress</name>
    <dbReference type="NCBI Taxonomy" id="3702"/>
    <lineage>
        <taxon>Eukaryota</taxon>
        <taxon>Viridiplantae</taxon>
        <taxon>Streptophyta</taxon>
        <taxon>Embryophyta</taxon>
        <taxon>Tracheophyta</taxon>
        <taxon>Spermatophyta</taxon>
        <taxon>Magnoliopsida</taxon>
        <taxon>eudicotyledons</taxon>
        <taxon>Gunneridae</taxon>
        <taxon>Pentapetalae</taxon>
        <taxon>rosids</taxon>
        <taxon>malvids</taxon>
        <taxon>Brassicales</taxon>
        <taxon>Brassicaceae</taxon>
        <taxon>Camelineae</taxon>
        <taxon>Arabidopsis</taxon>
    </lineage>
</organism>